<gene>
    <name evidence="1" type="primary">ypfN</name>
    <name type="ordered locus">SEN2463</name>
</gene>
<sequence>MDWLAKYWWILVLVFLVGVLLNVIKDLKRIDHKKFLANKPELPPHRDFNDKWDDEEDWPKKDQPKK</sequence>
<evidence type="ECO:0000255" key="1">
    <source>
        <dbReference type="HAMAP-Rule" id="MF_01566"/>
    </source>
</evidence>
<evidence type="ECO:0000256" key="2">
    <source>
        <dbReference type="SAM" id="MobiDB-lite"/>
    </source>
</evidence>
<name>YPFN_SALEP</name>
<dbReference type="EMBL" id="AM933172">
    <property type="protein sequence ID" value="CAR34048.1"/>
    <property type="molecule type" value="Genomic_DNA"/>
</dbReference>
<dbReference type="RefSeq" id="WP_000383842.1">
    <property type="nucleotide sequence ID" value="NC_011294.1"/>
</dbReference>
<dbReference type="SMR" id="B5R4J1"/>
<dbReference type="KEGG" id="set:SEN2463"/>
<dbReference type="HOGENOM" id="CLU_198936_0_0_6"/>
<dbReference type="Proteomes" id="UP000000613">
    <property type="component" value="Chromosome"/>
</dbReference>
<dbReference type="GO" id="GO:0005886">
    <property type="term" value="C:plasma membrane"/>
    <property type="evidence" value="ECO:0007669"/>
    <property type="project" value="UniProtKB-SubCell"/>
</dbReference>
<dbReference type="HAMAP" id="MF_01566">
    <property type="entry name" value="UPF0370"/>
    <property type="match status" value="1"/>
</dbReference>
<dbReference type="InterPro" id="IPR020910">
    <property type="entry name" value="UPF0370"/>
</dbReference>
<dbReference type="NCBIfam" id="NF010185">
    <property type="entry name" value="PRK13664.1"/>
    <property type="match status" value="1"/>
</dbReference>
<dbReference type="Pfam" id="PF13980">
    <property type="entry name" value="UPF0370"/>
    <property type="match status" value="1"/>
</dbReference>
<reference key="1">
    <citation type="journal article" date="2008" name="Genome Res.">
        <title>Comparative genome analysis of Salmonella enteritidis PT4 and Salmonella gallinarum 287/91 provides insights into evolutionary and host adaptation pathways.</title>
        <authorList>
            <person name="Thomson N.R."/>
            <person name="Clayton D.J."/>
            <person name="Windhorst D."/>
            <person name="Vernikos G."/>
            <person name="Davidson S."/>
            <person name="Churcher C."/>
            <person name="Quail M.A."/>
            <person name="Stevens M."/>
            <person name="Jones M.A."/>
            <person name="Watson M."/>
            <person name="Barron A."/>
            <person name="Layton A."/>
            <person name="Pickard D."/>
            <person name="Kingsley R.A."/>
            <person name="Bignell A."/>
            <person name="Clark L."/>
            <person name="Harris B."/>
            <person name="Ormond D."/>
            <person name="Abdellah Z."/>
            <person name="Brooks K."/>
            <person name="Cherevach I."/>
            <person name="Chillingworth T."/>
            <person name="Woodward J."/>
            <person name="Norberczak H."/>
            <person name="Lord A."/>
            <person name="Arrowsmith C."/>
            <person name="Jagels K."/>
            <person name="Moule S."/>
            <person name="Mungall K."/>
            <person name="Saunders M."/>
            <person name="Whitehead S."/>
            <person name="Chabalgoity J.A."/>
            <person name="Maskell D."/>
            <person name="Humphreys T."/>
            <person name="Roberts M."/>
            <person name="Barrow P.A."/>
            <person name="Dougan G."/>
            <person name="Parkhill J."/>
        </authorList>
    </citation>
    <scope>NUCLEOTIDE SEQUENCE [LARGE SCALE GENOMIC DNA]</scope>
    <source>
        <strain>P125109</strain>
    </source>
</reference>
<comment type="subcellular location">
    <subcellularLocation>
        <location evidence="1">Cell membrane</location>
        <topology evidence="1">Single-pass membrane protein</topology>
    </subcellularLocation>
</comment>
<comment type="similarity">
    <text evidence="1">Belongs to the UPF0370 family.</text>
</comment>
<organism>
    <name type="scientific">Salmonella enteritidis PT4 (strain P125109)</name>
    <dbReference type="NCBI Taxonomy" id="550537"/>
    <lineage>
        <taxon>Bacteria</taxon>
        <taxon>Pseudomonadati</taxon>
        <taxon>Pseudomonadota</taxon>
        <taxon>Gammaproteobacteria</taxon>
        <taxon>Enterobacterales</taxon>
        <taxon>Enterobacteriaceae</taxon>
        <taxon>Salmonella</taxon>
    </lineage>
</organism>
<accession>B5R4J1</accession>
<feature type="chain" id="PRO_1000199729" description="UPF0370 protein YpfN">
    <location>
        <begin position="1"/>
        <end position="66"/>
    </location>
</feature>
<feature type="transmembrane region" description="Helical" evidence="1">
    <location>
        <begin position="4"/>
        <end position="24"/>
    </location>
</feature>
<feature type="region of interest" description="Disordered" evidence="2">
    <location>
        <begin position="39"/>
        <end position="66"/>
    </location>
</feature>
<feature type="compositionally biased region" description="Basic and acidic residues" evidence="2">
    <location>
        <begin position="42"/>
        <end position="51"/>
    </location>
</feature>
<proteinExistence type="inferred from homology"/>
<protein>
    <recommendedName>
        <fullName evidence="1">UPF0370 protein YpfN</fullName>
    </recommendedName>
</protein>
<keyword id="KW-1003">Cell membrane</keyword>
<keyword id="KW-0472">Membrane</keyword>
<keyword id="KW-0812">Transmembrane</keyword>
<keyword id="KW-1133">Transmembrane helix</keyword>